<feature type="chain" id="PRO_0000386233" description="GTPase Obg">
    <location>
        <begin position="1"/>
        <end position="390"/>
    </location>
</feature>
<feature type="domain" description="Obg" evidence="2">
    <location>
        <begin position="1"/>
        <end position="159"/>
    </location>
</feature>
<feature type="domain" description="OBG-type G" evidence="1">
    <location>
        <begin position="160"/>
        <end position="333"/>
    </location>
</feature>
<feature type="region of interest" description="Disordered" evidence="3">
    <location>
        <begin position="127"/>
        <end position="147"/>
    </location>
</feature>
<feature type="compositionally biased region" description="Polar residues" evidence="3">
    <location>
        <begin position="129"/>
        <end position="145"/>
    </location>
</feature>
<feature type="binding site" evidence="1">
    <location>
        <begin position="166"/>
        <end position="173"/>
    </location>
    <ligand>
        <name>GTP</name>
        <dbReference type="ChEBI" id="CHEBI:37565"/>
    </ligand>
</feature>
<feature type="binding site" evidence="1">
    <location>
        <position position="173"/>
    </location>
    <ligand>
        <name>Mg(2+)</name>
        <dbReference type="ChEBI" id="CHEBI:18420"/>
    </ligand>
</feature>
<feature type="binding site" evidence="1">
    <location>
        <begin position="191"/>
        <end position="195"/>
    </location>
    <ligand>
        <name>GTP</name>
        <dbReference type="ChEBI" id="CHEBI:37565"/>
    </ligand>
</feature>
<feature type="binding site" evidence="1">
    <location>
        <position position="193"/>
    </location>
    <ligand>
        <name>Mg(2+)</name>
        <dbReference type="ChEBI" id="CHEBI:18420"/>
    </ligand>
</feature>
<feature type="binding site" evidence="1">
    <location>
        <begin position="213"/>
        <end position="216"/>
    </location>
    <ligand>
        <name>GTP</name>
        <dbReference type="ChEBI" id="CHEBI:37565"/>
    </ligand>
</feature>
<feature type="binding site" evidence="1">
    <location>
        <begin position="283"/>
        <end position="286"/>
    </location>
    <ligand>
        <name>GTP</name>
        <dbReference type="ChEBI" id="CHEBI:37565"/>
    </ligand>
</feature>
<feature type="binding site" evidence="1">
    <location>
        <begin position="314"/>
        <end position="316"/>
    </location>
    <ligand>
        <name>GTP</name>
        <dbReference type="ChEBI" id="CHEBI:37565"/>
    </ligand>
</feature>
<gene>
    <name evidence="1" type="primary">obg</name>
    <name type="synonym">yhbZ</name>
    <name type="ordered locus">STM3301</name>
</gene>
<evidence type="ECO:0000255" key="1">
    <source>
        <dbReference type="HAMAP-Rule" id="MF_01454"/>
    </source>
</evidence>
<evidence type="ECO:0000255" key="2">
    <source>
        <dbReference type="PROSITE-ProRule" id="PRU01231"/>
    </source>
</evidence>
<evidence type="ECO:0000256" key="3">
    <source>
        <dbReference type="SAM" id="MobiDB-lite"/>
    </source>
</evidence>
<evidence type="ECO:0000269" key="4">
    <source>
    </source>
</evidence>
<sequence>MKFVDEASILVVAGDGGNGCVSFRREKYIPKGGPDGGDGGDGGDVWMEADENLNTLIDYRFEKSFRAERGQNGASRDCTGKRGKDVTIKVPVGTRVIDQGTGETMGDMTKHGQRLLVAKGGWHGLGNTRFKSSVNRTPRQKTNGTPGDKRDLLLELMLLADVGMLGMPNAGKSTFIRAVSAAKPKVADYPFTTLVPSLGVVRMDSEKSFVVADIPGLIEGAAEGAGLGIRFLKHLERCRVLLHLIDIDPIDGSDPVENARIIIGELEKYSQDLAAKPRWLVFNKIDLMDKTEAEEKAKAIAEALGWEGKYYLISAASQLGVKDLCWDVMTFIIENPIAQAEEAKQPEKVEFMWDDYHRQQLAEVEEDADDDWDDDWDEDDEEGVEFIYKR</sequence>
<accession>Q8ZLS5</accession>
<keyword id="KW-0963">Cytoplasm</keyword>
<keyword id="KW-0342">GTP-binding</keyword>
<keyword id="KW-0378">Hydrolase</keyword>
<keyword id="KW-0460">Magnesium</keyword>
<keyword id="KW-0479">Metal-binding</keyword>
<keyword id="KW-0547">Nucleotide-binding</keyword>
<keyword id="KW-1185">Reference proteome</keyword>
<reference key="1">
    <citation type="journal article" date="2001" name="Nature">
        <title>Complete genome sequence of Salmonella enterica serovar Typhimurium LT2.</title>
        <authorList>
            <person name="McClelland M."/>
            <person name="Sanderson K.E."/>
            <person name="Spieth J."/>
            <person name="Clifton S.W."/>
            <person name="Latreille P."/>
            <person name="Courtney L."/>
            <person name="Porwollik S."/>
            <person name="Ali J."/>
            <person name="Dante M."/>
            <person name="Du F."/>
            <person name="Hou S."/>
            <person name="Layman D."/>
            <person name="Leonard S."/>
            <person name="Nguyen C."/>
            <person name="Scott K."/>
            <person name="Holmes A."/>
            <person name="Grewal N."/>
            <person name="Mulvaney E."/>
            <person name="Ryan E."/>
            <person name="Sun H."/>
            <person name="Florea L."/>
            <person name="Miller W."/>
            <person name="Stoneking T."/>
            <person name="Nhan M."/>
            <person name="Waterston R."/>
            <person name="Wilson R.K."/>
        </authorList>
    </citation>
    <scope>NUCLEOTIDE SEQUENCE [LARGE SCALE GENOMIC DNA]</scope>
    <source>
        <strain>LT2 / SGSC1412 / ATCC 700720</strain>
    </source>
</reference>
<reference key="2">
    <citation type="journal article" date="2007" name="Protein Sci.">
        <title>Functional analysis of the GTPases EngA and YhbZ encoded by Salmonella typhimurium.</title>
        <authorList>
            <person name="Lamb H.K."/>
            <person name="Thompson P."/>
            <person name="Elliott C."/>
            <person name="Charles I.G."/>
            <person name="Richards J."/>
            <person name="Lockyer M."/>
            <person name="Watkins N."/>
            <person name="Nichols C."/>
            <person name="Stammers D.K."/>
            <person name="Bagshaw C.R."/>
            <person name="Cooper A."/>
            <person name="Hawkins A.R."/>
        </authorList>
    </citation>
    <scope>SUBUNIT</scope>
    <scope>INTERACTION WITH RLUD AND S9</scope>
    <scope>GDP- AND GTP-BINDING</scope>
    <source>
        <strain>FIRN / SL3261</strain>
    </source>
</reference>
<name>OBG_SALTY</name>
<proteinExistence type="evidence at protein level"/>
<organism>
    <name type="scientific">Salmonella typhimurium (strain LT2 / SGSC1412 / ATCC 700720)</name>
    <dbReference type="NCBI Taxonomy" id="99287"/>
    <lineage>
        <taxon>Bacteria</taxon>
        <taxon>Pseudomonadati</taxon>
        <taxon>Pseudomonadota</taxon>
        <taxon>Gammaproteobacteria</taxon>
        <taxon>Enterobacterales</taxon>
        <taxon>Enterobacteriaceae</taxon>
        <taxon>Salmonella</taxon>
    </lineage>
</organism>
<protein>
    <recommendedName>
        <fullName evidence="1">GTPase Obg</fullName>
        <ecNumber evidence="1">3.6.5.-</ecNumber>
    </recommendedName>
    <alternativeName>
        <fullName evidence="1">GTP-binding protein Obg</fullName>
    </alternativeName>
</protein>
<comment type="function">
    <text evidence="1">An essential GTPase which binds GTP, GDP and possibly (p)ppGpp with moderate affinity, with high nucleotide exchange rates and a fairly low GTP hydrolysis rate. Plays a role in control of the cell cycle, stress response, ribosome biogenesis and in those bacteria that undergo differentiation, in morphogenesis control.</text>
</comment>
<comment type="function">
    <text>Binds GDP with a dissociation constant of 1.7 uM and GTP with a dissociation constant of 6.5 uM.</text>
</comment>
<comment type="cofactor">
    <cofactor evidence="1">
        <name>Mg(2+)</name>
        <dbReference type="ChEBI" id="CHEBI:18420"/>
    </cofactor>
</comment>
<comment type="biophysicochemical properties">
    <kinetics>
        <KM>6.5 uM for GTP</KM>
        <KM>1.7 uM for GDP</KM>
    </kinetics>
</comment>
<comment type="subunit">
    <text evidence="1 4">Monomer (By similarity). Binds RluD (AC P65836) as well as the 30S ribosomal subunit protein S9 (PubMed:17905831).</text>
</comment>
<comment type="subcellular location">
    <subcellularLocation>
        <location evidence="1">Cytoplasm</location>
    </subcellularLocation>
</comment>
<comment type="similarity">
    <text evidence="1">Belongs to the TRAFAC class OBG-HflX-like GTPase superfamily. OBG GTPase family.</text>
</comment>
<dbReference type="EC" id="3.6.5.-" evidence="1"/>
<dbReference type="EMBL" id="AE006468">
    <property type="protein sequence ID" value="AAL22171.1"/>
    <property type="molecule type" value="Genomic_DNA"/>
</dbReference>
<dbReference type="RefSeq" id="NP_462212.1">
    <property type="nucleotide sequence ID" value="NC_003197.2"/>
</dbReference>
<dbReference type="SMR" id="Q8ZLS5"/>
<dbReference type="STRING" id="99287.STM3301"/>
<dbReference type="PaxDb" id="99287-STM3301"/>
<dbReference type="GeneID" id="1254824"/>
<dbReference type="KEGG" id="stm:STM3301"/>
<dbReference type="PATRIC" id="fig|99287.12.peg.3501"/>
<dbReference type="HOGENOM" id="CLU_011747_2_0_6"/>
<dbReference type="OMA" id="VVFDWEP"/>
<dbReference type="PhylomeDB" id="Q8ZLS5"/>
<dbReference type="BioCyc" id="SENT99287:STM3301-MONOMER"/>
<dbReference type="Proteomes" id="UP000001014">
    <property type="component" value="Chromosome"/>
</dbReference>
<dbReference type="GO" id="GO:0005737">
    <property type="term" value="C:cytoplasm"/>
    <property type="evidence" value="ECO:0007669"/>
    <property type="project" value="UniProtKB-SubCell"/>
</dbReference>
<dbReference type="GO" id="GO:0005525">
    <property type="term" value="F:GTP binding"/>
    <property type="evidence" value="ECO:0000318"/>
    <property type="project" value="GO_Central"/>
</dbReference>
<dbReference type="GO" id="GO:0003924">
    <property type="term" value="F:GTPase activity"/>
    <property type="evidence" value="ECO:0000318"/>
    <property type="project" value="GO_Central"/>
</dbReference>
<dbReference type="GO" id="GO:0000287">
    <property type="term" value="F:magnesium ion binding"/>
    <property type="evidence" value="ECO:0007669"/>
    <property type="project" value="InterPro"/>
</dbReference>
<dbReference type="GO" id="GO:0042254">
    <property type="term" value="P:ribosome biogenesis"/>
    <property type="evidence" value="ECO:0007669"/>
    <property type="project" value="UniProtKB-UniRule"/>
</dbReference>
<dbReference type="CDD" id="cd01898">
    <property type="entry name" value="Obg"/>
    <property type="match status" value="1"/>
</dbReference>
<dbReference type="FunFam" id="2.70.210.12:FF:000001">
    <property type="entry name" value="GTPase Obg"/>
    <property type="match status" value="1"/>
</dbReference>
<dbReference type="FunFam" id="3.40.50.300:FF:000185">
    <property type="entry name" value="GTPase Obg"/>
    <property type="match status" value="1"/>
</dbReference>
<dbReference type="Gene3D" id="2.70.210.12">
    <property type="entry name" value="GTP1/OBG domain"/>
    <property type="match status" value="1"/>
</dbReference>
<dbReference type="Gene3D" id="3.40.50.300">
    <property type="entry name" value="P-loop containing nucleotide triphosphate hydrolases"/>
    <property type="match status" value="1"/>
</dbReference>
<dbReference type="HAMAP" id="MF_01454">
    <property type="entry name" value="GTPase_Obg"/>
    <property type="match status" value="1"/>
</dbReference>
<dbReference type="InterPro" id="IPR031167">
    <property type="entry name" value="G_OBG"/>
</dbReference>
<dbReference type="InterPro" id="IPR006073">
    <property type="entry name" value="GTP-bd"/>
</dbReference>
<dbReference type="InterPro" id="IPR014100">
    <property type="entry name" value="GTP-bd_Obg/CgtA"/>
</dbReference>
<dbReference type="InterPro" id="IPR006074">
    <property type="entry name" value="GTP1-OBG_CS"/>
</dbReference>
<dbReference type="InterPro" id="IPR006169">
    <property type="entry name" value="GTP1_OBG_dom"/>
</dbReference>
<dbReference type="InterPro" id="IPR036726">
    <property type="entry name" value="GTP1_OBG_dom_sf"/>
</dbReference>
<dbReference type="InterPro" id="IPR045086">
    <property type="entry name" value="OBG_GTPase"/>
</dbReference>
<dbReference type="InterPro" id="IPR027417">
    <property type="entry name" value="P-loop_NTPase"/>
</dbReference>
<dbReference type="NCBIfam" id="TIGR02729">
    <property type="entry name" value="Obg_CgtA"/>
    <property type="match status" value="1"/>
</dbReference>
<dbReference type="NCBIfam" id="NF008955">
    <property type="entry name" value="PRK12297.1"/>
    <property type="match status" value="1"/>
</dbReference>
<dbReference type="NCBIfam" id="NF008956">
    <property type="entry name" value="PRK12299.1"/>
    <property type="match status" value="1"/>
</dbReference>
<dbReference type="PANTHER" id="PTHR11702">
    <property type="entry name" value="DEVELOPMENTALLY REGULATED GTP-BINDING PROTEIN-RELATED"/>
    <property type="match status" value="1"/>
</dbReference>
<dbReference type="PANTHER" id="PTHR11702:SF31">
    <property type="entry name" value="MITOCHONDRIAL RIBOSOME-ASSOCIATED GTPASE 2"/>
    <property type="match status" value="1"/>
</dbReference>
<dbReference type="Pfam" id="PF01018">
    <property type="entry name" value="GTP1_OBG"/>
    <property type="match status" value="1"/>
</dbReference>
<dbReference type="Pfam" id="PF01926">
    <property type="entry name" value="MMR_HSR1"/>
    <property type="match status" value="1"/>
</dbReference>
<dbReference type="PIRSF" id="PIRSF002401">
    <property type="entry name" value="GTP_bd_Obg/CgtA"/>
    <property type="match status" value="1"/>
</dbReference>
<dbReference type="PRINTS" id="PR00326">
    <property type="entry name" value="GTP1OBG"/>
</dbReference>
<dbReference type="SUPFAM" id="SSF82051">
    <property type="entry name" value="Obg GTP-binding protein N-terminal domain"/>
    <property type="match status" value="1"/>
</dbReference>
<dbReference type="SUPFAM" id="SSF52540">
    <property type="entry name" value="P-loop containing nucleoside triphosphate hydrolases"/>
    <property type="match status" value="1"/>
</dbReference>
<dbReference type="PROSITE" id="PS51710">
    <property type="entry name" value="G_OBG"/>
    <property type="match status" value="1"/>
</dbReference>
<dbReference type="PROSITE" id="PS00905">
    <property type="entry name" value="GTP1_OBG"/>
    <property type="match status" value="1"/>
</dbReference>
<dbReference type="PROSITE" id="PS51883">
    <property type="entry name" value="OBG"/>
    <property type="match status" value="1"/>
</dbReference>